<evidence type="ECO:0000255" key="1">
    <source>
        <dbReference type="HAMAP-Rule" id="MF_00160"/>
    </source>
</evidence>
<protein>
    <recommendedName>
        <fullName evidence="1">Phosphoserine aminotransferase</fullName>
        <ecNumber evidence="1">2.6.1.52</ecNumber>
    </recommendedName>
    <alternativeName>
        <fullName evidence="1">Phosphohydroxythreonine aminotransferase</fullName>
        <shortName evidence="1">PSAT</shortName>
    </alternativeName>
</protein>
<gene>
    <name evidence="1" type="primary">serC</name>
    <name type="ordered locus">Daci_4720</name>
</gene>
<comment type="function">
    <text evidence="1">Catalyzes the reversible conversion of 3-phosphohydroxypyruvate to phosphoserine and of 3-hydroxy-2-oxo-4-phosphonooxybutanoate to phosphohydroxythreonine.</text>
</comment>
<comment type="catalytic activity">
    <reaction evidence="1">
        <text>O-phospho-L-serine + 2-oxoglutarate = 3-phosphooxypyruvate + L-glutamate</text>
        <dbReference type="Rhea" id="RHEA:14329"/>
        <dbReference type="ChEBI" id="CHEBI:16810"/>
        <dbReference type="ChEBI" id="CHEBI:18110"/>
        <dbReference type="ChEBI" id="CHEBI:29985"/>
        <dbReference type="ChEBI" id="CHEBI:57524"/>
        <dbReference type="EC" id="2.6.1.52"/>
    </reaction>
</comment>
<comment type="catalytic activity">
    <reaction evidence="1">
        <text>4-(phosphooxy)-L-threonine + 2-oxoglutarate = (R)-3-hydroxy-2-oxo-4-phosphooxybutanoate + L-glutamate</text>
        <dbReference type="Rhea" id="RHEA:16573"/>
        <dbReference type="ChEBI" id="CHEBI:16810"/>
        <dbReference type="ChEBI" id="CHEBI:29985"/>
        <dbReference type="ChEBI" id="CHEBI:58452"/>
        <dbReference type="ChEBI" id="CHEBI:58538"/>
        <dbReference type="EC" id="2.6.1.52"/>
    </reaction>
</comment>
<comment type="cofactor">
    <cofactor evidence="1">
        <name>pyridoxal 5'-phosphate</name>
        <dbReference type="ChEBI" id="CHEBI:597326"/>
    </cofactor>
    <text evidence="1">Binds 1 pyridoxal phosphate per subunit.</text>
</comment>
<comment type="pathway">
    <text evidence="1">Amino-acid biosynthesis; L-serine biosynthesis; L-serine from 3-phospho-D-glycerate: step 2/3.</text>
</comment>
<comment type="pathway">
    <text evidence="1">Cofactor biosynthesis; pyridoxine 5'-phosphate biosynthesis; pyridoxine 5'-phosphate from D-erythrose 4-phosphate: step 3/5.</text>
</comment>
<comment type="subunit">
    <text evidence="1">Homodimer.</text>
</comment>
<comment type="subcellular location">
    <subcellularLocation>
        <location evidence="1">Cytoplasm</location>
    </subcellularLocation>
</comment>
<comment type="similarity">
    <text evidence="1">Belongs to the class-V pyridoxal-phosphate-dependent aminotransferase family. SerC subfamily.</text>
</comment>
<organism>
    <name type="scientific">Delftia acidovorans (strain DSM 14801 / SPH-1)</name>
    <dbReference type="NCBI Taxonomy" id="398578"/>
    <lineage>
        <taxon>Bacteria</taxon>
        <taxon>Pseudomonadati</taxon>
        <taxon>Pseudomonadota</taxon>
        <taxon>Betaproteobacteria</taxon>
        <taxon>Burkholderiales</taxon>
        <taxon>Comamonadaceae</taxon>
        <taxon>Delftia</taxon>
    </lineage>
</organism>
<proteinExistence type="inferred from homology"/>
<dbReference type="EC" id="2.6.1.52" evidence="1"/>
<dbReference type="EMBL" id="CP000884">
    <property type="protein sequence ID" value="ABX37349.1"/>
    <property type="molecule type" value="Genomic_DNA"/>
</dbReference>
<dbReference type="RefSeq" id="WP_012206519.1">
    <property type="nucleotide sequence ID" value="NC_010002.1"/>
</dbReference>
<dbReference type="SMR" id="A9BM04"/>
<dbReference type="STRING" id="398578.Daci_4720"/>
<dbReference type="GeneID" id="24118692"/>
<dbReference type="KEGG" id="dac:Daci_4720"/>
<dbReference type="eggNOG" id="COG1932">
    <property type="taxonomic scope" value="Bacteria"/>
</dbReference>
<dbReference type="HOGENOM" id="CLU_034866_0_2_4"/>
<dbReference type="UniPathway" id="UPA00135">
    <property type="reaction ID" value="UER00197"/>
</dbReference>
<dbReference type="UniPathway" id="UPA00244">
    <property type="reaction ID" value="UER00311"/>
</dbReference>
<dbReference type="Proteomes" id="UP000000784">
    <property type="component" value="Chromosome"/>
</dbReference>
<dbReference type="GO" id="GO:0005737">
    <property type="term" value="C:cytoplasm"/>
    <property type="evidence" value="ECO:0007669"/>
    <property type="project" value="UniProtKB-SubCell"/>
</dbReference>
<dbReference type="GO" id="GO:0004648">
    <property type="term" value="F:O-phospho-L-serine:2-oxoglutarate aminotransferase activity"/>
    <property type="evidence" value="ECO:0007669"/>
    <property type="project" value="UniProtKB-UniRule"/>
</dbReference>
<dbReference type="GO" id="GO:0030170">
    <property type="term" value="F:pyridoxal phosphate binding"/>
    <property type="evidence" value="ECO:0007669"/>
    <property type="project" value="UniProtKB-UniRule"/>
</dbReference>
<dbReference type="GO" id="GO:0006564">
    <property type="term" value="P:L-serine biosynthetic process"/>
    <property type="evidence" value="ECO:0007669"/>
    <property type="project" value="UniProtKB-UniRule"/>
</dbReference>
<dbReference type="GO" id="GO:0008615">
    <property type="term" value="P:pyridoxine biosynthetic process"/>
    <property type="evidence" value="ECO:0007669"/>
    <property type="project" value="UniProtKB-UniRule"/>
</dbReference>
<dbReference type="FunFam" id="3.40.640.10:FF:000010">
    <property type="entry name" value="Phosphoserine aminotransferase"/>
    <property type="match status" value="1"/>
</dbReference>
<dbReference type="FunFam" id="3.90.1150.10:FF:000006">
    <property type="entry name" value="Phosphoserine aminotransferase"/>
    <property type="match status" value="1"/>
</dbReference>
<dbReference type="Gene3D" id="3.90.1150.10">
    <property type="entry name" value="Aspartate Aminotransferase, domain 1"/>
    <property type="match status" value="1"/>
</dbReference>
<dbReference type="Gene3D" id="3.40.640.10">
    <property type="entry name" value="Type I PLP-dependent aspartate aminotransferase-like (Major domain)"/>
    <property type="match status" value="1"/>
</dbReference>
<dbReference type="HAMAP" id="MF_00160">
    <property type="entry name" value="SerC_aminotrans_5"/>
    <property type="match status" value="1"/>
</dbReference>
<dbReference type="InterPro" id="IPR000192">
    <property type="entry name" value="Aminotrans_V_dom"/>
</dbReference>
<dbReference type="InterPro" id="IPR020578">
    <property type="entry name" value="Aminotrans_V_PyrdxlP_BS"/>
</dbReference>
<dbReference type="InterPro" id="IPR022278">
    <property type="entry name" value="Pser_aminoTfrase"/>
</dbReference>
<dbReference type="InterPro" id="IPR015424">
    <property type="entry name" value="PyrdxlP-dep_Trfase"/>
</dbReference>
<dbReference type="InterPro" id="IPR015421">
    <property type="entry name" value="PyrdxlP-dep_Trfase_major"/>
</dbReference>
<dbReference type="InterPro" id="IPR015422">
    <property type="entry name" value="PyrdxlP-dep_Trfase_small"/>
</dbReference>
<dbReference type="NCBIfam" id="NF003764">
    <property type="entry name" value="PRK05355.1"/>
    <property type="match status" value="1"/>
</dbReference>
<dbReference type="NCBIfam" id="TIGR01364">
    <property type="entry name" value="serC_1"/>
    <property type="match status" value="1"/>
</dbReference>
<dbReference type="PANTHER" id="PTHR43247">
    <property type="entry name" value="PHOSPHOSERINE AMINOTRANSFERASE"/>
    <property type="match status" value="1"/>
</dbReference>
<dbReference type="PANTHER" id="PTHR43247:SF1">
    <property type="entry name" value="PHOSPHOSERINE AMINOTRANSFERASE"/>
    <property type="match status" value="1"/>
</dbReference>
<dbReference type="Pfam" id="PF00266">
    <property type="entry name" value="Aminotran_5"/>
    <property type="match status" value="1"/>
</dbReference>
<dbReference type="PIRSF" id="PIRSF000525">
    <property type="entry name" value="SerC"/>
    <property type="match status" value="1"/>
</dbReference>
<dbReference type="SUPFAM" id="SSF53383">
    <property type="entry name" value="PLP-dependent transferases"/>
    <property type="match status" value="1"/>
</dbReference>
<dbReference type="PROSITE" id="PS00595">
    <property type="entry name" value="AA_TRANSFER_CLASS_5"/>
    <property type="match status" value="1"/>
</dbReference>
<keyword id="KW-0028">Amino-acid biosynthesis</keyword>
<keyword id="KW-0032">Aminotransferase</keyword>
<keyword id="KW-0963">Cytoplasm</keyword>
<keyword id="KW-0663">Pyridoxal phosphate</keyword>
<keyword id="KW-0664">Pyridoxine biosynthesis</keyword>
<keyword id="KW-1185">Reference proteome</keyword>
<keyword id="KW-0718">Serine biosynthesis</keyword>
<keyword id="KW-0808">Transferase</keyword>
<reference key="1">
    <citation type="submission" date="2007-11" db="EMBL/GenBank/DDBJ databases">
        <title>Complete sequence of Delftia acidovorans DSM 14801 / SPH-1.</title>
        <authorList>
            <person name="Copeland A."/>
            <person name="Lucas S."/>
            <person name="Lapidus A."/>
            <person name="Barry K."/>
            <person name="Glavina del Rio T."/>
            <person name="Dalin E."/>
            <person name="Tice H."/>
            <person name="Pitluck S."/>
            <person name="Lowry S."/>
            <person name="Clum A."/>
            <person name="Schmutz J."/>
            <person name="Larimer F."/>
            <person name="Land M."/>
            <person name="Hauser L."/>
            <person name="Kyrpides N."/>
            <person name="Kim E."/>
            <person name="Schleheck D."/>
            <person name="Richardson P."/>
        </authorList>
    </citation>
    <scope>NUCLEOTIDE SEQUENCE [LARGE SCALE GENOMIC DNA]</scope>
    <source>
        <strain>DSM 14801 / SPH-1</strain>
    </source>
</reference>
<sequence length="369" mass="40254">MNRPYNFSAGPAAIPAEVLQQAAAEMLDWHGSGMSVMEMSHRGKEFISIYEQAEADLRELLAVPPEFKILFMQGGGLAENAIVPLNLSRAGTVDFVLSGSWSQKSAKEARKYVADAHIAASGEDGKFTALPAPESWQLSRGASYVHICSNETIHGVEFQELPDLKALGCDAPLVVDFSSHVASRPVDWSRVGLAFGGAQKNLGPAGLTLVIVREDLLGHALPACPSAFDYKTVADNQSMYNTPPTWGIYIAGLTFQWIKRQTEGGLTGVAALEARNIAKADLFYQYVDQSSFYVNKVAANCRSRMNIPFFLRDESRNDAFLAGARERGLLQLKGHKSVGGMRASIYNAMPIAGVQALVEYMREFEQRNA</sequence>
<name>SERC_DELAS</name>
<feature type="chain" id="PRO_1000097212" description="Phosphoserine aminotransferase">
    <location>
        <begin position="1"/>
        <end position="369"/>
    </location>
</feature>
<feature type="binding site" evidence="1">
    <location>
        <position position="42"/>
    </location>
    <ligand>
        <name>L-glutamate</name>
        <dbReference type="ChEBI" id="CHEBI:29985"/>
    </ligand>
</feature>
<feature type="binding site" evidence="1">
    <location>
        <position position="101"/>
    </location>
    <ligand>
        <name>pyridoxal 5'-phosphate</name>
        <dbReference type="ChEBI" id="CHEBI:597326"/>
    </ligand>
</feature>
<feature type="binding site" evidence="1">
    <location>
        <position position="152"/>
    </location>
    <ligand>
        <name>pyridoxal 5'-phosphate</name>
        <dbReference type="ChEBI" id="CHEBI:597326"/>
    </ligand>
</feature>
<feature type="binding site" evidence="1">
    <location>
        <position position="176"/>
    </location>
    <ligand>
        <name>pyridoxal 5'-phosphate</name>
        <dbReference type="ChEBI" id="CHEBI:597326"/>
    </ligand>
</feature>
<feature type="binding site" evidence="1">
    <location>
        <position position="199"/>
    </location>
    <ligand>
        <name>pyridoxal 5'-phosphate</name>
        <dbReference type="ChEBI" id="CHEBI:597326"/>
    </ligand>
</feature>
<feature type="binding site" evidence="1">
    <location>
        <begin position="241"/>
        <end position="242"/>
    </location>
    <ligand>
        <name>pyridoxal 5'-phosphate</name>
        <dbReference type="ChEBI" id="CHEBI:597326"/>
    </ligand>
</feature>
<feature type="modified residue" description="N6-(pyridoxal phosphate)lysine" evidence="1">
    <location>
        <position position="200"/>
    </location>
</feature>
<accession>A9BM04</accession>